<protein>
    <recommendedName>
        <fullName evidence="1">5'-nucleotidase SurE</fullName>
        <ecNumber evidence="1">3.1.3.5</ecNumber>
    </recommendedName>
    <alternativeName>
        <fullName evidence="1">Nucleoside 5'-monophosphate phosphohydrolase</fullName>
    </alternativeName>
</protein>
<evidence type="ECO:0000255" key="1">
    <source>
        <dbReference type="HAMAP-Rule" id="MF_00060"/>
    </source>
</evidence>
<comment type="function">
    <text evidence="1">Nucleotidase that shows phosphatase activity on nucleoside 5'-monophosphates.</text>
</comment>
<comment type="catalytic activity">
    <reaction evidence="1">
        <text>a ribonucleoside 5'-phosphate + H2O = a ribonucleoside + phosphate</text>
        <dbReference type="Rhea" id="RHEA:12484"/>
        <dbReference type="ChEBI" id="CHEBI:15377"/>
        <dbReference type="ChEBI" id="CHEBI:18254"/>
        <dbReference type="ChEBI" id="CHEBI:43474"/>
        <dbReference type="ChEBI" id="CHEBI:58043"/>
        <dbReference type="EC" id="3.1.3.5"/>
    </reaction>
</comment>
<comment type="cofactor">
    <cofactor evidence="1">
        <name>a divalent metal cation</name>
        <dbReference type="ChEBI" id="CHEBI:60240"/>
    </cofactor>
    <text evidence="1">Binds 1 divalent metal cation per subunit.</text>
</comment>
<comment type="subcellular location">
    <subcellularLocation>
        <location evidence="1">Cytoplasm</location>
    </subcellularLocation>
</comment>
<comment type="similarity">
    <text evidence="1">Belongs to the SurE nucleotidase family.</text>
</comment>
<sequence length="249" mass="26315">MRILISNDDGVTAPGIAALHAALVDYAECAVIAPDQDKSGASSSLTLDRPLHPQTLANGFISLNGTPTDCVHLGLNGLLPQTPDMVVSGINLGANLGDDVLYSGTVAAALEGRFLGGTSLAFSLLSRQPDNLPTAAYIARRLVEAQSRLVLPPRTVLNVNIPNLPLEHIRGIQLTRLGHRARAAAPTKVVNPRGKEGYWIAVAGDAEDGGPGTDFHAVMQGYVSITPLQLDRTFNDAFEQLDGWLEGLL</sequence>
<gene>
    <name evidence="1" type="primary">surE</name>
    <name type="ordered locus">Pput_4157</name>
</gene>
<dbReference type="EC" id="3.1.3.5" evidence="1"/>
<dbReference type="EMBL" id="CP000712">
    <property type="protein sequence ID" value="ABQ80281.1"/>
    <property type="molecule type" value="Genomic_DNA"/>
</dbReference>
<dbReference type="SMR" id="A5W821"/>
<dbReference type="KEGG" id="ppf:Pput_4157"/>
<dbReference type="eggNOG" id="COG0496">
    <property type="taxonomic scope" value="Bacteria"/>
</dbReference>
<dbReference type="HOGENOM" id="CLU_045192_1_2_6"/>
<dbReference type="GO" id="GO:0005737">
    <property type="term" value="C:cytoplasm"/>
    <property type="evidence" value="ECO:0007669"/>
    <property type="project" value="UniProtKB-SubCell"/>
</dbReference>
<dbReference type="GO" id="GO:0008254">
    <property type="term" value="F:3'-nucleotidase activity"/>
    <property type="evidence" value="ECO:0007669"/>
    <property type="project" value="TreeGrafter"/>
</dbReference>
<dbReference type="GO" id="GO:0008253">
    <property type="term" value="F:5'-nucleotidase activity"/>
    <property type="evidence" value="ECO:0007669"/>
    <property type="project" value="UniProtKB-UniRule"/>
</dbReference>
<dbReference type="GO" id="GO:0004309">
    <property type="term" value="F:exopolyphosphatase activity"/>
    <property type="evidence" value="ECO:0007669"/>
    <property type="project" value="TreeGrafter"/>
</dbReference>
<dbReference type="GO" id="GO:0046872">
    <property type="term" value="F:metal ion binding"/>
    <property type="evidence" value="ECO:0007669"/>
    <property type="project" value="UniProtKB-UniRule"/>
</dbReference>
<dbReference type="GO" id="GO:0000166">
    <property type="term" value="F:nucleotide binding"/>
    <property type="evidence" value="ECO:0007669"/>
    <property type="project" value="UniProtKB-KW"/>
</dbReference>
<dbReference type="FunFam" id="3.40.1210.10:FF:000001">
    <property type="entry name" value="5'/3'-nucleotidase SurE"/>
    <property type="match status" value="1"/>
</dbReference>
<dbReference type="Gene3D" id="3.40.1210.10">
    <property type="entry name" value="Survival protein SurE-like phosphatase/nucleotidase"/>
    <property type="match status" value="1"/>
</dbReference>
<dbReference type="HAMAP" id="MF_00060">
    <property type="entry name" value="SurE"/>
    <property type="match status" value="1"/>
</dbReference>
<dbReference type="InterPro" id="IPR030048">
    <property type="entry name" value="SurE"/>
</dbReference>
<dbReference type="InterPro" id="IPR002828">
    <property type="entry name" value="SurE-like_Pase/nucleotidase"/>
</dbReference>
<dbReference type="InterPro" id="IPR036523">
    <property type="entry name" value="SurE-like_sf"/>
</dbReference>
<dbReference type="NCBIfam" id="NF001489">
    <property type="entry name" value="PRK00346.1-3"/>
    <property type="match status" value="1"/>
</dbReference>
<dbReference type="NCBIfam" id="NF001490">
    <property type="entry name" value="PRK00346.1-4"/>
    <property type="match status" value="1"/>
</dbReference>
<dbReference type="NCBIfam" id="TIGR00087">
    <property type="entry name" value="surE"/>
    <property type="match status" value="1"/>
</dbReference>
<dbReference type="PANTHER" id="PTHR30457">
    <property type="entry name" value="5'-NUCLEOTIDASE SURE"/>
    <property type="match status" value="1"/>
</dbReference>
<dbReference type="PANTHER" id="PTHR30457:SF12">
    <property type="entry name" value="5'_3'-NUCLEOTIDASE SURE"/>
    <property type="match status" value="1"/>
</dbReference>
<dbReference type="Pfam" id="PF01975">
    <property type="entry name" value="SurE"/>
    <property type="match status" value="1"/>
</dbReference>
<dbReference type="SUPFAM" id="SSF64167">
    <property type="entry name" value="SurE-like"/>
    <property type="match status" value="1"/>
</dbReference>
<name>SURE_PSEP1</name>
<keyword id="KW-0963">Cytoplasm</keyword>
<keyword id="KW-0378">Hydrolase</keyword>
<keyword id="KW-0479">Metal-binding</keyword>
<keyword id="KW-0547">Nucleotide-binding</keyword>
<reference key="1">
    <citation type="submission" date="2007-05" db="EMBL/GenBank/DDBJ databases">
        <title>Complete sequence of Pseudomonas putida F1.</title>
        <authorList>
            <consortium name="US DOE Joint Genome Institute"/>
            <person name="Copeland A."/>
            <person name="Lucas S."/>
            <person name="Lapidus A."/>
            <person name="Barry K."/>
            <person name="Detter J.C."/>
            <person name="Glavina del Rio T."/>
            <person name="Hammon N."/>
            <person name="Israni S."/>
            <person name="Dalin E."/>
            <person name="Tice H."/>
            <person name="Pitluck S."/>
            <person name="Chain P."/>
            <person name="Malfatti S."/>
            <person name="Shin M."/>
            <person name="Vergez L."/>
            <person name="Schmutz J."/>
            <person name="Larimer F."/>
            <person name="Land M."/>
            <person name="Hauser L."/>
            <person name="Kyrpides N."/>
            <person name="Lykidis A."/>
            <person name="Parales R."/>
            <person name="Richardson P."/>
        </authorList>
    </citation>
    <scope>NUCLEOTIDE SEQUENCE [LARGE SCALE GENOMIC DNA]</scope>
    <source>
        <strain>ATCC 700007 / DSM 6899 / JCM 31910 / BCRC 17059 / LMG 24140 / F1</strain>
    </source>
</reference>
<feature type="chain" id="PRO_1000007771" description="5'-nucleotidase SurE">
    <location>
        <begin position="1"/>
        <end position="249"/>
    </location>
</feature>
<feature type="binding site" evidence="1">
    <location>
        <position position="8"/>
    </location>
    <ligand>
        <name>a divalent metal cation</name>
        <dbReference type="ChEBI" id="CHEBI:60240"/>
    </ligand>
</feature>
<feature type="binding site" evidence="1">
    <location>
        <position position="9"/>
    </location>
    <ligand>
        <name>a divalent metal cation</name>
        <dbReference type="ChEBI" id="CHEBI:60240"/>
    </ligand>
</feature>
<feature type="binding site" evidence="1">
    <location>
        <position position="39"/>
    </location>
    <ligand>
        <name>a divalent metal cation</name>
        <dbReference type="ChEBI" id="CHEBI:60240"/>
    </ligand>
</feature>
<feature type="binding site" evidence="1">
    <location>
        <position position="91"/>
    </location>
    <ligand>
        <name>a divalent metal cation</name>
        <dbReference type="ChEBI" id="CHEBI:60240"/>
    </ligand>
</feature>
<organism>
    <name type="scientific">Pseudomonas putida (strain ATCC 700007 / DSM 6899 / JCM 31910 / BCRC 17059 / LMG 24140 / F1)</name>
    <dbReference type="NCBI Taxonomy" id="351746"/>
    <lineage>
        <taxon>Bacteria</taxon>
        <taxon>Pseudomonadati</taxon>
        <taxon>Pseudomonadota</taxon>
        <taxon>Gammaproteobacteria</taxon>
        <taxon>Pseudomonadales</taxon>
        <taxon>Pseudomonadaceae</taxon>
        <taxon>Pseudomonas</taxon>
    </lineage>
</organism>
<accession>A5W821</accession>
<proteinExistence type="inferred from homology"/>